<organism>
    <name type="scientific">Xanthomonas axonopodis pv. citri (strain 306)</name>
    <dbReference type="NCBI Taxonomy" id="190486"/>
    <lineage>
        <taxon>Bacteria</taxon>
        <taxon>Pseudomonadati</taxon>
        <taxon>Pseudomonadota</taxon>
        <taxon>Gammaproteobacteria</taxon>
        <taxon>Lysobacterales</taxon>
        <taxon>Lysobacteraceae</taxon>
        <taxon>Xanthomonas</taxon>
    </lineage>
</organism>
<accession>Q8PM12</accession>
<feature type="chain" id="PRO_0000176706" description="Large ribosomal subunit protein bL9">
    <location>
        <begin position="1"/>
        <end position="149"/>
    </location>
</feature>
<evidence type="ECO:0000255" key="1">
    <source>
        <dbReference type="HAMAP-Rule" id="MF_00503"/>
    </source>
</evidence>
<evidence type="ECO:0000305" key="2"/>
<name>RL9_XANAC</name>
<proteinExistence type="inferred from homology"/>
<keyword id="KW-0687">Ribonucleoprotein</keyword>
<keyword id="KW-0689">Ribosomal protein</keyword>
<keyword id="KW-0694">RNA-binding</keyword>
<keyword id="KW-0699">rRNA-binding</keyword>
<sequence>MDLILLQKVTNLGNLGDKVSVKPGYGRNFLVPQGKAVPATAANVEAFETKRAEYEAKANSILAEAQSRATKFEGASVTIGAHASTEGKLYGSVGPRDIAEAFTAAGLPLEKSEVILGEGAFRNVGEYDVVLHLHADVETTVKVIVESDA</sequence>
<dbReference type="EMBL" id="AE008923">
    <property type="protein sequence ID" value="AAM36490.1"/>
    <property type="molecule type" value="Genomic_DNA"/>
</dbReference>
<dbReference type="RefSeq" id="WP_003485864.1">
    <property type="nucleotide sequence ID" value="NC_003919.1"/>
</dbReference>
<dbReference type="SMR" id="Q8PM12"/>
<dbReference type="GeneID" id="97510002"/>
<dbReference type="KEGG" id="xac:XAC1622"/>
<dbReference type="eggNOG" id="COG0359">
    <property type="taxonomic scope" value="Bacteria"/>
</dbReference>
<dbReference type="HOGENOM" id="CLU_078938_4_1_6"/>
<dbReference type="Proteomes" id="UP000000576">
    <property type="component" value="Chromosome"/>
</dbReference>
<dbReference type="GO" id="GO:1990904">
    <property type="term" value="C:ribonucleoprotein complex"/>
    <property type="evidence" value="ECO:0007669"/>
    <property type="project" value="UniProtKB-KW"/>
</dbReference>
<dbReference type="GO" id="GO:0005840">
    <property type="term" value="C:ribosome"/>
    <property type="evidence" value="ECO:0007669"/>
    <property type="project" value="UniProtKB-KW"/>
</dbReference>
<dbReference type="GO" id="GO:0019843">
    <property type="term" value="F:rRNA binding"/>
    <property type="evidence" value="ECO:0007669"/>
    <property type="project" value="UniProtKB-UniRule"/>
</dbReference>
<dbReference type="GO" id="GO:0003735">
    <property type="term" value="F:structural constituent of ribosome"/>
    <property type="evidence" value="ECO:0007669"/>
    <property type="project" value="InterPro"/>
</dbReference>
<dbReference type="GO" id="GO:0006412">
    <property type="term" value="P:translation"/>
    <property type="evidence" value="ECO:0007669"/>
    <property type="project" value="UniProtKB-UniRule"/>
</dbReference>
<dbReference type="FunFam" id="3.10.430.100:FF:000007">
    <property type="entry name" value="50S ribosomal protein L9"/>
    <property type="match status" value="1"/>
</dbReference>
<dbReference type="FunFam" id="3.40.5.10:FF:000001">
    <property type="entry name" value="50S ribosomal protein L9"/>
    <property type="match status" value="1"/>
</dbReference>
<dbReference type="Gene3D" id="3.10.430.100">
    <property type="entry name" value="Ribosomal protein L9, C-terminal domain"/>
    <property type="match status" value="1"/>
</dbReference>
<dbReference type="Gene3D" id="3.40.5.10">
    <property type="entry name" value="Ribosomal protein L9, N-terminal domain"/>
    <property type="match status" value="1"/>
</dbReference>
<dbReference type="HAMAP" id="MF_00503">
    <property type="entry name" value="Ribosomal_bL9"/>
    <property type="match status" value="1"/>
</dbReference>
<dbReference type="InterPro" id="IPR000244">
    <property type="entry name" value="Ribosomal_bL9"/>
</dbReference>
<dbReference type="InterPro" id="IPR009027">
    <property type="entry name" value="Ribosomal_bL9/RNase_H1_N"/>
</dbReference>
<dbReference type="InterPro" id="IPR020594">
    <property type="entry name" value="Ribosomal_bL9_bac/chp"/>
</dbReference>
<dbReference type="InterPro" id="IPR020069">
    <property type="entry name" value="Ribosomal_bL9_C"/>
</dbReference>
<dbReference type="InterPro" id="IPR036791">
    <property type="entry name" value="Ribosomal_bL9_C_sf"/>
</dbReference>
<dbReference type="InterPro" id="IPR020070">
    <property type="entry name" value="Ribosomal_bL9_N"/>
</dbReference>
<dbReference type="InterPro" id="IPR036935">
    <property type="entry name" value="Ribosomal_bL9_N_sf"/>
</dbReference>
<dbReference type="NCBIfam" id="TIGR00158">
    <property type="entry name" value="L9"/>
    <property type="match status" value="1"/>
</dbReference>
<dbReference type="PANTHER" id="PTHR21368">
    <property type="entry name" value="50S RIBOSOMAL PROTEIN L9"/>
    <property type="match status" value="1"/>
</dbReference>
<dbReference type="Pfam" id="PF03948">
    <property type="entry name" value="Ribosomal_L9_C"/>
    <property type="match status" value="1"/>
</dbReference>
<dbReference type="Pfam" id="PF01281">
    <property type="entry name" value="Ribosomal_L9_N"/>
    <property type="match status" value="1"/>
</dbReference>
<dbReference type="SUPFAM" id="SSF55658">
    <property type="entry name" value="L9 N-domain-like"/>
    <property type="match status" value="1"/>
</dbReference>
<dbReference type="SUPFAM" id="SSF55653">
    <property type="entry name" value="Ribosomal protein L9 C-domain"/>
    <property type="match status" value="1"/>
</dbReference>
<dbReference type="PROSITE" id="PS00651">
    <property type="entry name" value="RIBOSOMAL_L9"/>
    <property type="match status" value="1"/>
</dbReference>
<reference key="1">
    <citation type="journal article" date="2002" name="Nature">
        <title>Comparison of the genomes of two Xanthomonas pathogens with differing host specificities.</title>
        <authorList>
            <person name="da Silva A.C.R."/>
            <person name="Ferro J.A."/>
            <person name="Reinach F.C."/>
            <person name="Farah C.S."/>
            <person name="Furlan L.R."/>
            <person name="Quaggio R.B."/>
            <person name="Monteiro-Vitorello C.B."/>
            <person name="Van Sluys M.A."/>
            <person name="Almeida N.F. Jr."/>
            <person name="Alves L.M.C."/>
            <person name="do Amaral A.M."/>
            <person name="Bertolini M.C."/>
            <person name="Camargo L.E.A."/>
            <person name="Camarotte G."/>
            <person name="Cannavan F."/>
            <person name="Cardozo J."/>
            <person name="Chambergo F."/>
            <person name="Ciapina L.P."/>
            <person name="Cicarelli R.M.B."/>
            <person name="Coutinho L.L."/>
            <person name="Cursino-Santos J.R."/>
            <person name="El-Dorry H."/>
            <person name="Faria J.B."/>
            <person name="Ferreira A.J.S."/>
            <person name="Ferreira R.C.C."/>
            <person name="Ferro M.I.T."/>
            <person name="Formighieri E.F."/>
            <person name="Franco M.C."/>
            <person name="Greggio C.C."/>
            <person name="Gruber A."/>
            <person name="Katsuyama A.M."/>
            <person name="Kishi L.T."/>
            <person name="Leite R.P."/>
            <person name="Lemos E.G.M."/>
            <person name="Lemos M.V.F."/>
            <person name="Locali E.C."/>
            <person name="Machado M.A."/>
            <person name="Madeira A.M.B.N."/>
            <person name="Martinez-Rossi N.M."/>
            <person name="Martins E.C."/>
            <person name="Meidanis J."/>
            <person name="Menck C.F.M."/>
            <person name="Miyaki C.Y."/>
            <person name="Moon D.H."/>
            <person name="Moreira L.M."/>
            <person name="Novo M.T.M."/>
            <person name="Okura V.K."/>
            <person name="Oliveira M.C."/>
            <person name="Oliveira V.R."/>
            <person name="Pereira H.A."/>
            <person name="Rossi A."/>
            <person name="Sena J.A.D."/>
            <person name="Silva C."/>
            <person name="de Souza R.F."/>
            <person name="Spinola L.A.F."/>
            <person name="Takita M.A."/>
            <person name="Tamura R.E."/>
            <person name="Teixeira E.C."/>
            <person name="Tezza R.I.D."/>
            <person name="Trindade dos Santos M."/>
            <person name="Truffi D."/>
            <person name="Tsai S.M."/>
            <person name="White F.F."/>
            <person name="Setubal J.C."/>
            <person name="Kitajima J.P."/>
        </authorList>
    </citation>
    <scope>NUCLEOTIDE SEQUENCE [LARGE SCALE GENOMIC DNA]</scope>
    <source>
        <strain>306</strain>
    </source>
</reference>
<protein>
    <recommendedName>
        <fullName evidence="1">Large ribosomal subunit protein bL9</fullName>
    </recommendedName>
    <alternativeName>
        <fullName evidence="2">50S ribosomal protein L9</fullName>
    </alternativeName>
</protein>
<gene>
    <name evidence="1" type="primary">rplI</name>
    <name type="ordered locus">XAC1622</name>
</gene>
<comment type="function">
    <text evidence="1">Binds to the 23S rRNA.</text>
</comment>
<comment type="similarity">
    <text evidence="1">Belongs to the bacterial ribosomal protein bL9 family.</text>
</comment>